<evidence type="ECO:0000255" key="1">
    <source>
        <dbReference type="HAMAP-Rule" id="MF_01552"/>
    </source>
</evidence>
<accession>Q0VRM2</accession>
<proteinExistence type="inferred from homology"/>
<organism>
    <name type="scientific">Alcanivorax borkumensis (strain ATCC 700651 / DSM 11573 / NCIMB 13689 / SK2)</name>
    <dbReference type="NCBI Taxonomy" id="393595"/>
    <lineage>
        <taxon>Bacteria</taxon>
        <taxon>Pseudomonadati</taxon>
        <taxon>Pseudomonadota</taxon>
        <taxon>Gammaproteobacteria</taxon>
        <taxon>Oceanospirillales</taxon>
        <taxon>Alcanivoracaceae</taxon>
        <taxon>Alcanivorax</taxon>
    </lineage>
</organism>
<reference key="1">
    <citation type="journal article" date="2006" name="Nat. Biotechnol.">
        <title>Genome sequence of the ubiquitous hydrocarbon-degrading marine bacterium Alcanivorax borkumensis.</title>
        <authorList>
            <person name="Schneiker S."/>
            <person name="Martins dos Santos V.A.P."/>
            <person name="Bartels D."/>
            <person name="Bekel T."/>
            <person name="Brecht M."/>
            <person name="Buhrmester J."/>
            <person name="Chernikova T.N."/>
            <person name="Denaro R."/>
            <person name="Ferrer M."/>
            <person name="Gertler C."/>
            <person name="Goesmann A."/>
            <person name="Golyshina O.V."/>
            <person name="Kaminski F."/>
            <person name="Khachane A.N."/>
            <person name="Lang S."/>
            <person name="Linke B."/>
            <person name="McHardy A.C."/>
            <person name="Meyer F."/>
            <person name="Nechitaylo T."/>
            <person name="Puehler A."/>
            <person name="Regenhardt D."/>
            <person name="Rupp O."/>
            <person name="Sabirova J.S."/>
            <person name="Selbitschka W."/>
            <person name="Yakimov M.M."/>
            <person name="Timmis K.N."/>
            <person name="Vorhoelter F.-J."/>
            <person name="Weidner S."/>
            <person name="Kaiser O."/>
            <person name="Golyshin P.N."/>
        </authorList>
    </citation>
    <scope>NUCLEOTIDE SEQUENCE [LARGE SCALE GENOMIC DNA]</scope>
    <source>
        <strain>ATCC 700651 / DSM 11573 / NCIMB 13689 / SK2</strain>
    </source>
</reference>
<sequence>MKIAILSRNKRLYSTRRLVEAGEAAGHEMHVIDTLRCYMSMVAHKPEIHYKGEVLEGFDAVIPRIGASITQYGTAVVRQFEMMGVFPVNESVAISRSRDKLRSLQLLSRKGVGLPITGFAHSPDDIPDLINMVRGAPLVIKMLEGTQGIGVVLAETRKAAESVIEAFMGLNVSVMVQEYIKEAGGADIRCFVVGGKVIAAMKRQAAPGEFRSNLHRGGSASLIRITPEERATAVRAARIMGLNVAGVDILRSHHGPVVMEVNSSPGLEGIETATNKDVAGLLIKFIEKDARPYRTQTKGSKG</sequence>
<name>RIMK_ALCBS</name>
<dbReference type="EC" id="6.3.2.-" evidence="1"/>
<dbReference type="EMBL" id="AM286690">
    <property type="protein sequence ID" value="CAL16176.1"/>
    <property type="molecule type" value="Genomic_DNA"/>
</dbReference>
<dbReference type="RefSeq" id="WP_011588012.1">
    <property type="nucleotide sequence ID" value="NC_008260.1"/>
</dbReference>
<dbReference type="SMR" id="Q0VRM2"/>
<dbReference type="STRING" id="393595.ABO_0728"/>
<dbReference type="KEGG" id="abo:ABO_0728"/>
<dbReference type="eggNOG" id="COG0189">
    <property type="taxonomic scope" value="Bacteria"/>
</dbReference>
<dbReference type="HOGENOM" id="CLU_054353_0_1_6"/>
<dbReference type="OrthoDB" id="3865600at2"/>
<dbReference type="Proteomes" id="UP000008871">
    <property type="component" value="Chromosome"/>
</dbReference>
<dbReference type="GO" id="GO:0005737">
    <property type="term" value="C:cytoplasm"/>
    <property type="evidence" value="ECO:0007669"/>
    <property type="project" value="TreeGrafter"/>
</dbReference>
<dbReference type="GO" id="GO:0005524">
    <property type="term" value="F:ATP binding"/>
    <property type="evidence" value="ECO:0007669"/>
    <property type="project" value="UniProtKB-UniRule"/>
</dbReference>
<dbReference type="GO" id="GO:0046872">
    <property type="term" value="F:metal ion binding"/>
    <property type="evidence" value="ECO:0007669"/>
    <property type="project" value="UniProtKB-KW"/>
</dbReference>
<dbReference type="GO" id="GO:0018169">
    <property type="term" value="F:ribosomal S6-glutamic acid ligase activity"/>
    <property type="evidence" value="ECO:0007669"/>
    <property type="project" value="TreeGrafter"/>
</dbReference>
<dbReference type="GO" id="GO:0036211">
    <property type="term" value="P:protein modification process"/>
    <property type="evidence" value="ECO:0007669"/>
    <property type="project" value="InterPro"/>
</dbReference>
<dbReference type="GO" id="GO:0009432">
    <property type="term" value="P:SOS response"/>
    <property type="evidence" value="ECO:0007669"/>
    <property type="project" value="TreeGrafter"/>
</dbReference>
<dbReference type="GO" id="GO:0006412">
    <property type="term" value="P:translation"/>
    <property type="evidence" value="ECO:0007669"/>
    <property type="project" value="UniProtKB-KW"/>
</dbReference>
<dbReference type="FunFam" id="3.40.50.20:FF:000004">
    <property type="entry name" value="Probable alpha-L-glutamate ligase"/>
    <property type="match status" value="1"/>
</dbReference>
<dbReference type="FunFam" id="3.30.1490.20:FF:000005">
    <property type="entry name" value="Probable alpha-L-glutamate ligase 1"/>
    <property type="match status" value="1"/>
</dbReference>
<dbReference type="FunFam" id="3.30.470.20:FF:000016">
    <property type="entry name" value="Ribosomal protein S6--L-glutamate ligase"/>
    <property type="match status" value="1"/>
</dbReference>
<dbReference type="Gene3D" id="3.40.50.20">
    <property type="match status" value="1"/>
</dbReference>
<dbReference type="Gene3D" id="3.30.1490.20">
    <property type="entry name" value="ATP-grasp fold, A domain"/>
    <property type="match status" value="1"/>
</dbReference>
<dbReference type="Gene3D" id="3.30.470.20">
    <property type="entry name" value="ATP-grasp fold, B domain"/>
    <property type="match status" value="1"/>
</dbReference>
<dbReference type="HAMAP" id="MF_01552">
    <property type="entry name" value="RimK"/>
    <property type="match status" value="1"/>
</dbReference>
<dbReference type="InterPro" id="IPR011761">
    <property type="entry name" value="ATP-grasp"/>
</dbReference>
<dbReference type="InterPro" id="IPR013651">
    <property type="entry name" value="ATP-grasp_RimK-type"/>
</dbReference>
<dbReference type="InterPro" id="IPR013815">
    <property type="entry name" value="ATP_grasp_subdomain_1"/>
</dbReference>
<dbReference type="InterPro" id="IPR023533">
    <property type="entry name" value="RimK"/>
</dbReference>
<dbReference type="InterPro" id="IPR041107">
    <property type="entry name" value="Rimk_N"/>
</dbReference>
<dbReference type="InterPro" id="IPR004666">
    <property type="entry name" value="Rp_bS6_RimK/Lys_biosynth_LsyX"/>
</dbReference>
<dbReference type="NCBIfam" id="NF007764">
    <property type="entry name" value="PRK10446.1"/>
    <property type="match status" value="1"/>
</dbReference>
<dbReference type="NCBIfam" id="TIGR00768">
    <property type="entry name" value="rimK_fam"/>
    <property type="match status" value="1"/>
</dbReference>
<dbReference type="PANTHER" id="PTHR21621:SF7">
    <property type="entry name" value="RIBOSOMAL PROTEIN BS6--L-GLUTAMATE LIGASE"/>
    <property type="match status" value="1"/>
</dbReference>
<dbReference type="PANTHER" id="PTHR21621">
    <property type="entry name" value="RIBOSOMAL PROTEIN S6 MODIFICATION PROTEIN"/>
    <property type="match status" value="1"/>
</dbReference>
<dbReference type="Pfam" id="PF08443">
    <property type="entry name" value="RimK"/>
    <property type="match status" value="1"/>
</dbReference>
<dbReference type="Pfam" id="PF18030">
    <property type="entry name" value="Rimk_N"/>
    <property type="match status" value="1"/>
</dbReference>
<dbReference type="SUPFAM" id="SSF56059">
    <property type="entry name" value="Glutathione synthetase ATP-binding domain-like"/>
    <property type="match status" value="1"/>
</dbReference>
<dbReference type="PROSITE" id="PS50975">
    <property type="entry name" value="ATP_GRASP"/>
    <property type="match status" value="1"/>
</dbReference>
<comment type="cofactor">
    <cofactor evidence="1">
        <name>Mg(2+)</name>
        <dbReference type="ChEBI" id="CHEBI:18420"/>
    </cofactor>
    <cofactor evidence="1">
        <name>Mn(2+)</name>
        <dbReference type="ChEBI" id="CHEBI:29035"/>
    </cofactor>
    <text evidence="1">Binds 2 magnesium or manganese ions per subunit.</text>
</comment>
<comment type="similarity">
    <text evidence="1">Belongs to the RimK family.</text>
</comment>
<gene>
    <name evidence="1" type="primary">rimK</name>
    <name type="ordered locus">ABO_0728</name>
</gene>
<protein>
    <recommendedName>
        <fullName evidence="1">Probable alpha-L-glutamate ligase</fullName>
        <ecNumber evidence="1">6.3.2.-</ecNumber>
    </recommendedName>
</protein>
<feature type="chain" id="PRO_1000068832" description="Probable alpha-L-glutamate ligase">
    <location>
        <begin position="1"/>
        <end position="302"/>
    </location>
</feature>
<feature type="domain" description="ATP-grasp" evidence="1">
    <location>
        <begin position="104"/>
        <end position="287"/>
    </location>
</feature>
<feature type="binding site" evidence="1">
    <location>
        <position position="141"/>
    </location>
    <ligand>
        <name>ATP</name>
        <dbReference type="ChEBI" id="CHEBI:30616"/>
    </ligand>
</feature>
<feature type="binding site" evidence="1">
    <location>
        <begin position="178"/>
        <end position="179"/>
    </location>
    <ligand>
        <name>ATP</name>
        <dbReference type="ChEBI" id="CHEBI:30616"/>
    </ligand>
</feature>
<feature type="binding site" evidence="1">
    <location>
        <position position="187"/>
    </location>
    <ligand>
        <name>ATP</name>
        <dbReference type="ChEBI" id="CHEBI:30616"/>
    </ligand>
</feature>
<feature type="binding site" evidence="1">
    <location>
        <begin position="211"/>
        <end position="213"/>
    </location>
    <ligand>
        <name>ATP</name>
        <dbReference type="ChEBI" id="CHEBI:30616"/>
    </ligand>
</feature>
<feature type="binding site" evidence="1">
    <location>
        <position position="248"/>
    </location>
    <ligand>
        <name>Mg(2+)</name>
        <dbReference type="ChEBI" id="CHEBI:18420"/>
        <label>1</label>
    </ligand>
</feature>
<feature type="binding site" evidence="1">
    <location>
        <position position="248"/>
    </location>
    <ligand>
        <name>Mn(2+)</name>
        <dbReference type="ChEBI" id="CHEBI:29035"/>
        <label>1</label>
    </ligand>
</feature>
<feature type="binding site" evidence="1">
    <location>
        <position position="260"/>
    </location>
    <ligand>
        <name>Mg(2+)</name>
        <dbReference type="ChEBI" id="CHEBI:18420"/>
        <label>1</label>
    </ligand>
</feature>
<feature type="binding site" evidence="1">
    <location>
        <position position="260"/>
    </location>
    <ligand>
        <name>Mg(2+)</name>
        <dbReference type="ChEBI" id="CHEBI:18420"/>
        <label>2</label>
    </ligand>
</feature>
<feature type="binding site" evidence="1">
    <location>
        <position position="260"/>
    </location>
    <ligand>
        <name>Mn(2+)</name>
        <dbReference type="ChEBI" id="CHEBI:29035"/>
        <label>1</label>
    </ligand>
</feature>
<feature type="binding site" evidence="1">
    <location>
        <position position="260"/>
    </location>
    <ligand>
        <name>Mn(2+)</name>
        <dbReference type="ChEBI" id="CHEBI:29035"/>
        <label>2</label>
    </ligand>
</feature>
<feature type="binding site" evidence="1">
    <location>
        <position position="262"/>
    </location>
    <ligand>
        <name>Mg(2+)</name>
        <dbReference type="ChEBI" id="CHEBI:18420"/>
        <label>2</label>
    </ligand>
</feature>
<feature type="binding site" evidence="1">
    <location>
        <position position="262"/>
    </location>
    <ligand>
        <name>Mn(2+)</name>
        <dbReference type="ChEBI" id="CHEBI:29035"/>
        <label>2</label>
    </ligand>
</feature>
<keyword id="KW-0067">ATP-binding</keyword>
<keyword id="KW-0436">Ligase</keyword>
<keyword id="KW-0460">Magnesium</keyword>
<keyword id="KW-0464">Manganese</keyword>
<keyword id="KW-0479">Metal-binding</keyword>
<keyword id="KW-0547">Nucleotide-binding</keyword>
<keyword id="KW-0648">Protein biosynthesis</keyword>
<keyword id="KW-1185">Reference proteome</keyword>